<evidence type="ECO:0000255" key="1">
    <source>
        <dbReference type="HAMAP-Rule" id="MF_00819"/>
    </source>
</evidence>
<proteinExistence type="inferred from homology"/>
<accession>C3P9J4</accession>
<comment type="function">
    <text evidence="1">Essential for sporulation. Interferes with or is a negative regulator of the pathway leading to asymmetric septation.</text>
</comment>
<comment type="similarity">
    <text evidence="1">Belongs to the SpoVG family.</text>
</comment>
<protein>
    <recommendedName>
        <fullName evidence="1">Putative septation protein SpoVG</fullName>
    </recommendedName>
    <alternativeName>
        <fullName evidence="1">Stage V sporulation protein G</fullName>
    </alternativeName>
</protein>
<gene>
    <name evidence="1" type="primary">spoVG</name>
    <name type="ordered locus">BAA_0058</name>
</gene>
<sequence length="97" mass="10934">MEVTDVRLRRVNTEGRMRAIASITLDHEFVVHDIRVIDGNNGLFVAMPSKRTPDGEFRDIAHPINSGTRSKIQDAVLTEYHRLGELEEVEFEEAGAS</sequence>
<reference key="1">
    <citation type="submission" date="2009-04" db="EMBL/GenBank/DDBJ databases">
        <title>Genome sequence of Bacillus anthracis A0248.</title>
        <authorList>
            <person name="Dodson R.J."/>
            <person name="Munk A.C."/>
            <person name="Bruce D."/>
            <person name="Detter C."/>
            <person name="Tapia R."/>
            <person name="Sutton G."/>
            <person name="Sims D."/>
            <person name="Brettin T."/>
        </authorList>
    </citation>
    <scope>NUCLEOTIDE SEQUENCE [LARGE SCALE GENOMIC DNA]</scope>
    <source>
        <strain>A0248</strain>
    </source>
</reference>
<name>SP5G_BACAA</name>
<dbReference type="EMBL" id="CP001598">
    <property type="protein sequence ID" value="ACQ47610.1"/>
    <property type="molecule type" value="Genomic_DNA"/>
</dbReference>
<dbReference type="RefSeq" id="WP_000454041.1">
    <property type="nucleotide sequence ID" value="NC_012659.1"/>
</dbReference>
<dbReference type="SMR" id="C3P9J4"/>
<dbReference type="GeneID" id="93011022"/>
<dbReference type="KEGG" id="bai:BAA_0058"/>
<dbReference type="HOGENOM" id="CLU_103669_2_1_9"/>
<dbReference type="GO" id="GO:0030436">
    <property type="term" value="P:asexual sporulation"/>
    <property type="evidence" value="ECO:0007669"/>
    <property type="project" value="UniProtKB-UniRule"/>
</dbReference>
<dbReference type="GO" id="GO:0000917">
    <property type="term" value="P:division septum assembly"/>
    <property type="evidence" value="ECO:0007669"/>
    <property type="project" value="UniProtKB-KW"/>
</dbReference>
<dbReference type="GO" id="GO:0030435">
    <property type="term" value="P:sporulation resulting in formation of a cellular spore"/>
    <property type="evidence" value="ECO:0007669"/>
    <property type="project" value="UniProtKB-KW"/>
</dbReference>
<dbReference type="FunFam" id="3.30.1120.40:FF:000001">
    <property type="entry name" value="Putative septation protein SpoVG"/>
    <property type="match status" value="1"/>
</dbReference>
<dbReference type="Gene3D" id="3.30.1120.40">
    <property type="entry name" value="Stage V sporulation protein G"/>
    <property type="match status" value="1"/>
</dbReference>
<dbReference type="HAMAP" id="MF_00819">
    <property type="entry name" value="SpoVG"/>
    <property type="match status" value="1"/>
</dbReference>
<dbReference type="InterPro" id="IPR007170">
    <property type="entry name" value="SpoVG"/>
</dbReference>
<dbReference type="InterPro" id="IPR036751">
    <property type="entry name" value="SpoVG_sf"/>
</dbReference>
<dbReference type="NCBIfam" id="NF009749">
    <property type="entry name" value="PRK13259.1"/>
    <property type="match status" value="1"/>
</dbReference>
<dbReference type="PANTHER" id="PTHR38429">
    <property type="entry name" value="SEPTATION PROTEIN SPOVG-RELATED"/>
    <property type="match status" value="1"/>
</dbReference>
<dbReference type="PANTHER" id="PTHR38429:SF1">
    <property type="entry name" value="SEPTATION PROTEIN SPOVG-RELATED"/>
    <property type="match status" value="1"/>
</dbReference>
<dbReference type="Pfam" id="PF04026">
    <property type="entry name" value="SpoVG"/>
    <property type="match status" value="1"/>
</dbReference>
<dbReference type="SUPFAM" id="SSF160537">
    <property type="entry name" value="SpoVG-like"/>
    <property type="match status" value="1"/>
</dbReference>
<organism>
    <name type="scientific">Bacillus anthracis (strain A0248)</name>
    <dbReference type="NCBI Taxonomy" id="592021"/>
    <lineage>
        <taxon>Bacteria</taxon>
        <taxon>Bacillati</taxon>
        <taxon>Bacillota</taxon>
        <taxon>Bacilli</taxon>
        <taxon>Bacillales</taxon>
        <taxon>Bacillaceae</taxon>
        <taxon>Bacillus</taxon>
        <taxon>Bacillus cereus group</taxon>
    </lineage>
</organism>
<keyword id="KW-0131">Cell cycle</keyword>
<keyword id="KW-0132">Cell division</keyword>
<keyword id="KW-0717">Septation</keyword>
<keyword id="KW-0749">Sporulation</keyword>
<feature type="chain" id="PRO_1000148680" description="Putative septation protein SpoVG">
    <location>
        <begin position="1"/>
        <end position="97"/>
    </location>
</feature>